<feature type="chain" id="PRO_0000269122" description="Small ribosomal subunit protein uS14">
    <location>
        <begin position="1"/>
        <end position="61"/>
    </location>
</feature>
<feature type="binding site" evidence="1">
    <location>
        <position position="24"/>
    </location>
    <ligand>
        <name>Zn(2+)</name>
        <dbReference type="ChEBI" id="CHEBI:29105"/>
    </ligand>
</feature>
<feature type="binding site" evidence="1">
    <location>
        <position position="27"/>
    </location>
    <ligand>
        <name>Zn(2+)</name>
        <dbReference type="ChEBI" id="CHEBI:29105"/>
    </ligand>
</feature>
<feature type="binding site" evidence="1">
    <location>
        <position position="40"/>
    </location>
    <ligand>
        <name>Zn(2+)</name>
        <dbReference type="ChEBI" id="CHEBI:29105"/>
    </ligand>
</feature>
<feature type="binding site" evidence="1">
    <location>
        <position position="43"/>
    </location>
    <ligand>
        <name>Zn(2+)</name>
        <dbReference type="ChEBI" id="CHEBI:29105"/>
    </ligand>
</feature>
<proteinExistence type="inferred from homology"/>
<organism>
    <name type="scientific">Malacoplasma penetrans (strain HF-2)</name>
    <name type="common">Mycoplasma penetrans</name>
    <dbReference type="NCBI Taxonomy" id="272633"/>
    <lineage>
        <taxon>Bacteria</taxon>
        <taxon>Bacillati</taxon>
        <taxon>Mycoplasmatota</taxon>
        <taxon>Mycoplasmoidales</taxon>
        <taxon>Mycoplasmoidaceae</taxon>
        <taxon>Malacoplasma</taxon>
    </lineage>
</organism>
<sequence>MAKKSLIVKQKKHPKFKVRAYTRCERCGRPRAVIRKFGICRLCFRDLAYKGAIPGVKKASW</sequence>
<dbReference type="EMBL" id="BA000026">
    <property type="protein sequence ID" value="BAC44790.1"/>
    <property type="molecule type" value="Genomic_DNA"/>
</dbReference>
<dbReference type="RefSeq" id="WP_011077818.1">
    <property type="nucleotide sequence ID" value="NC_004432.1"/>
</dbReference>
<dbReference type="SMR" id="Q8EUC6"/>
<dbReference type="FunCoup" id="Q8EUC6">
    <property type="interactions" value="81"/>
</dbReference>
<dbReference type="STRING" id="272633.gene:10732124"/>
<dbReference type="KEGG" id="mpe:MYPE10040"/>
<dbReference type="eggNOG" id="COG0199">
    <property type="taxonomic scope" value="Bacteria"/>
</dbReference>
<dbReference type="HOGENOM" id="CLU_139869_3_0_14"/>
<dbReference type="InParanoid" id="Q8EUC6"/>
<dbReference type="Proteomes" id="UP000002522">
    <property type="component" value="Chromosome"/>
</dbReference>
<dbReference type="GO" id="GO:0005737">
    <property type="term" value="C:cytoplasm"/>
    <property type="evidence" value="ECO:0007669"/>
    <property type="project" value="UniProtKB-ARBA"/>
</dbReference>
<dbReference type="GO" id="GO:0015935">
    <property type="term" value="C:small ribosomal subunit"/>
    <property type="evidence" value="ECO:0007669"/>
    <property type="project" value="TreeGrafter"/>
</dbReference>
<dbReference type="GO" id="GO:0019843">
    <property type="term" value="F:rRNA binding"/>
    <property type="evidence" value="ECO:0007669"/>
    <property type="project" value="UniProtKB-UniRule"/>
</dbReference>
<dbReference type="GO" id="GO:0003735">
    <property type="term" value="F:structural constituent of ribosome"/>
    <property type="evidence" value="ECO:0007669"/>
    <property type="project" value="InterPro"/>
</dbReference>
<dbReference type="GO" id="GO:0008270">
    <property type="term" value="F:zinc ion binding"/>
    <property type="evidence" value="ECO:0007669"/>
    <property type="project" value="UniProtKB-UniRule"/>
</dbReference>
<dbReference type="GO" id="GO:0006412">
    <property type="term" value="P:translation"/>
    <property type="evidence" value="ECO:0007669"/>
    <property type="project" value="UniProtKB-UniRule"/>
</dbReference>
<dbReference type="FunFam" id="4.10.830.10:FF:000001">
    <property type="entry name" value="30S ribosomal protein S14 type Z"/>
    <property type="match status" value="1"/>
</dbReference>
<dbReference type="Gene3D" id="4.10.830.10">
    <property type="entry name" value="30s Ribosomal Protein S14, Chain N"/>
    <property type="match status" value="1"/>
</dbReference>
<dbReference type="HAMAP" id="MF_01364_B">
    <property type="entry name" value="Ribosomal_uS14_2_B"/>
    <property type="match status" value="1"/>
</dbReference>
<dbReference type="InterPro" id="IPR001209">
    <property type="entry name" value="Ribosomal_uS14"/>
</dbReference>
<dbReference type="InterPro" id="IPR023053">
    <property type="entry name" value="Ribosomal_uS14_bact"/>
</dbReference>
<dbReference type="InterPro" id="IPR018271">
    <property type="entry name" value="Ribosomal_uS14_CS"/>
</dbReference>
<dbReference type="InterPro" id="IPR043140">
    <property type="entry name" value="Ribosomal_uS14_sf"/>
</dbReference>
<dbReference type="NCBIfam" id="NF005974">
    <property type="entry name" value="PRK08061.1"/>
    <property type="match status" value="1"/>
</dbReference>
<dbReference type="PANTHER" id="PTHR19836">
    <property type="entry name" value="30S RIBOSOMAL PROTEIN S14"/>
    <property type="match status" value="1"/>
</dbReference>
<dbReference type="PANTHER" id="PTHR19836:SF19">
    <property type="entry name" value="SMALL RIBOSOMAL SUBUNIT PROTEIN US14M"/>
    <property type="match status" value="1"/>
</dbReference>
<dbReference type="Pfam" id="PF00253">
    <property type="entry name" value="Ribosomal_S14"/>
    <property type="match status" value="1"/>
</dbReference>
<dbReference type="SUPFAM" id="SSF57716">
    <property type="entry name" value="Glucocorticoid receptor-like (DNA-binding domain)"/>
    <property type="match status" value="1"/>
</dbReference>
<dbReference type="PROSITE" id="PS00527">
    <property type="entry name" value="RIBOSOMAL_S14"/>
    <property type="match status" value="1"/>
</dbReference>
<reference key="1">
    <citation type="journal article" date="2002" name="Nucleic Acids Res.">
        <title>The complete genomic sequence of Mycoplasma penetrans, an intracellular bacterial pathogen in humans.</title>
        <authorList>
            <person name="Sasaki Y."/>
            <person name="Ishikawa J."/>
            <person name="Yamashita A."/>
            <person name="Oshima K."/>
            <person name="Kenri T."/>
            <person name="Furuya K."/>
            <person name="Yoshino C."/>
            <person name="Horino A."/>
            <person name="Shiba T."/>
            <person name="Sasaki T."/>
            <person name="Hattori M."/>
        </authorList>
    </citation>
    <scope>NUCLEOTIDE SEQUENCE [LARGE SCALE GENOMIC DNA]</scope>
    <source>
        <strain>HF-2</strain>
    </source>
</reference>
<gene>
    <name evidence="1" type="primary">rpsZ</name>
    <name evidence="1" type="synonym">rpsN</name>
    <name type="ordered locus">MYPE10040</name>
</gene>
<protein>
    <recommendedName>
        <fullName evidence="1">Small ribosomal subunit protein uS14</fullName>
    </recommendedName>
    <alternativeName>
        <fullName evidence="2">30S ribosomal protein S14 type Z</fullName>
    </alternativeName>
</protein>
<accession>Q8EUC6</accession>
<keyword id="KW-0479">Metal-binding</keyword>
<keyword id="KW-1185">Reference proteome</keyword>
<keyword id="KW-0687">Ribonucleoprotein</keyword>
<keyword id="KW-0689">Ribosomal protein</keyword>
<keyword id="KW-0694">RNA-binding</keyword>
<keyword id="KW-0699">rRNA-binding</keyword>
<keyword id="KW-0862">Zinc</keyword>
<evidence type="ECO:0000255" key="1">
    <source>
        <dbReference type="HAMAP-Rule" id="MF_01364"/>
    </source>
</evidence>
<evidence type="ECO:0000305" key="2"/>
<name>RS14Z_MALP2</name>
<comment type="function">
    <text evidence="1">Binds 16S rRNA, required for the assembly of 30S particles and may also be responsible for determining the conformation of the 16S rRNA at the A site.</text>
</comment>
<comment type="cofactor">
    <cofactor evidence="1">
        <name>Zn(2+)</name>
        <dbReference type="ChEBI" id="CHEBI:29105"/>
    </cofactor>
    <text evidence="1">Binds 1 zinc ion per subunit.</text>
</comment>
<comment type="subunit">
    <text evidence="1">Part of the 30S ribosomal subunit. Contacts proteins S3 and S10.</text>
</comment>
<comment type="similarity">
    <text evidence="1">Belongs to the universal ribosomal protein uS14 family. Zinc-binding uS14 subfamily.</text>
</comment>